<organism>
    <name type="scientific">Methanocaldococcus jannaschii (strain ATCC 43067 / DSM 2661 / JAL-1 / JCM 10045 / NBRC 100440)</name>
    <name type="common">Methanococcus jannaschii</name>
    <dbReference type="NCBI Taxonomy" id="243232"/>
    <lineage>
        <taxon>Archaea</taxon>
        <taxon>Methanobacteriati</taxon>
        <taxon>Methanobacteriota</taxon>
        <taxon>Methanomada group</taxon>
        <taxon>Methanococci</taxon>
        <taxon>Methanococcales</taxon>
        <taxon>Methanocaldococcaceae</taxon>
        <taxon>Methanocaldococcus</taxon>
    </lineage>
</organism>
<dbReference type="EMBL" id="L77117">
    <property type="protein sequence ID" value="AAB99164.1"/>
    <property type="molecule type" value="Genomic_DNA"/>
</dbReference>
<dbReference type="PIR" id="A64445">
    <property type="entry name" value="A64445"/>
</dbReference>
<dbReference type="SMR" id="Q58562"/>
<dbReference type="STRING" id="243232.MJ_1162"/>
<dbReference type="PaxDb" id="243232-MJ_1162"/>
<dbReference type="EnsemblBacteria" id="AAB99164">
    <property type="protein sequence ID" value="AAB99164"/>
    <property type="gene ID" value="MJ_1162"/>
</dbReference>
<dbReference type="KEGG" id="mja:MJ_1162"/>
<dbReference type="eggNOG" id="arCOG01145">
    <property type="taxonomic scope" value="Archaea"/>
</dbReference>
<dbReference type="HOGENOM" id="CLU_041441_5_0_2"/>
<dbReference type="InParanoid" id="Q58562"/>
<dbReference type="PhylomeDB" id="Q58562"/>
<dbReference type="Proteomes" id="UP000000805">
    <property type="component" value="Chromosome"/>
</dbReference>
<dbReference type="GO" id="GO:0016787">
    <property type="term" value="F:hydrolase activity"/>
    <property type="evidence" value="ECO:0007669"/>
    <property type="project" value="InterPro"/>
</dbReference>
<dbReference type="CDD" id="cd07392">
    <property type="entry name" value="MPP_PAE1087"/>
    <property type="match status" value="1"/>
</dbReference>
<dbReference type="Gene3D" id="3.60.21.10">
    <property type="match status" value="1"/>
</dbReference>
<dbReference type="InterPro" id="IPR004843">
    <property type="entry name" value="Calcineurin-like_PHP_ApaH"/>
</dbReference>
<dbReference type="InterPro" id="IPR029052">
    <property type="entry name" value="Metallo-depent_PP-like"/>
</dbReference>
<dbReference type="InterPro" id="IPR041733">
    <property type="entry name" value="PAE1087_MPP"/>
</dbReference>
<dbReference type="PANTHER" id="PTHR37523:SF1">
    <property type="entry name" value="CALCINEURIN-LIKE PHOSPHOESTERASE DOMAIN-CONTAINING PROTEIN"/>
    <property type="match status" value="1"/>
</dbReference>
<dbReference type="PANTHER" id="PTHR37523">
    <property type="entry name" value="METALLOPHOSPHOESTERASE"/>
    <property type="match status" value="1"/>
</dbReference>
<dbReference type="Pfam" id="PF00149">
    <property type="entry name" value="Metallophos"/>
    <property type="match status" value="1"/>
</dbReference>
<dbReference type="SUPFAM" id="SSF56300">
    <property type="entry name" value="Metallo-dependent phosphatases"/>
    <property type="match status" value="1"/>
</dbReference>
<keyword id="KW-1185">Reference proteome</keyword>
<reference key="1">
    <citation type="journal article" date="1996" name="Science">
        <title>Complete genome sequence of the methanogenic archaeon, Methanococcus jannaschii.</title>
        <authorList>
            <person name="Bult C.J."/>
            <person name="White O."/>
            <person name="Olsen G.J."/>
            <person name="Zhou L."/>
            <person name="Fleischmann R.D."/>
            <person name="Sutton G.G."/>
            <person name="Blake J.A."/>
            <person name="FitzGerald L.M."/>
            <person name="Clayton R.A."/>
            <person name="Gocayne J.D."/>
            <person name="Kerlavage A.R."/>
            <person name="Dougherty B.A."/>
            <person name="Tomb J.-F."/>
            <person name="Adams M.D."/>
            <person name="Reich C.I."/>
            <person name="Overbeek R."/>
            <person name="Kirkness E.F."/>
            <person name="Weinstock K.G."/>
            <person name="Merrick J.M."/>
            <person name="Glodek A."/>
            <person name="Scott J.L."/>
            <person name="Geoghagen N.S.M."/>
            <person name="Weidman J.F."/>
            <person name="Fuhrmann J.L."/>
            <person name="Nguyen D."/>
            <person name="Utterback T.R."/>
            <person name="Kelley J.M."/>
            <person name="Peterson J.D."/>
            <person name="Sadow P.W."/>
            <person name="Hanna M.C."/>
            <person name="Cotton M.D."/>
            <person name="Roberts K.M."/>
            <person name="Hurst M.A."/>
            <person name="Kaine B.P."/>
            <person name="Borodovsky M."/>
            <person name="Klenk H.-P."/>
            <person name="Fraser C.M."/>
            <person name="Smith H.O."/>
            <person name="Woese C.R."/>
            <person name="Venter J.C."/>
        </authorList>
    </citation>
    <scope>NUCLEOTIDE SEQUENCE [LARGE SCALE GENOMIC DNA]</scope>
    <source>
        <strain>ATCC 43067 / DSM 2661 / JAL-1 / JCM 10045 / NBRC 100440</strain>
    </source>
</reference>
<protein>
    <recommendedName>
        <fullName>Uncharacterized protein MJ1162</fullName>
    </recommendedName>
</protein>
<name>Y1162_METJA</name>
<proteinExistence type="predicted"/>
<feature type="chain" id="PRO_0000107198" description="Uncharacterized protein MJ1162">
    <location>
        <begin position="1"/>
        <end position="218"/>
    </location>
</feature>
<sequence>MVKYMKIVGITDLHGKLPPAVREFKDFADVLVVCGDITHFGKGIEVIEKLAELSDYMEVLCVPGNCDTKEVIDELNSFKLNIDRKVKKIENINFVGIGGSNKTPFNTPNEYTEEEIYNKLINVVKNLKNIFLVSHAPPYNTMADIVDLDKDIHVGSKSIRKIIEDFNENIRFCACGHIHESRCIDKIGNTIVVNPSPKSYFVYDTKKNMVVLDDFNGF</sequence>
<gene>
    <name type="ordered locus">MJ1162</name>
</gene>
<accession>Q58562</accession>